<dbReference type="EMBL" id="AB257405">
    <property type="protein sequence ID" value="BAK20219.1"/>
    <property type="status" value="ALT_SEQ"/>
    <property type="molecule type" value="Genomic_DNA"/>
</dbReference>
<dbReference type="EMBL" id="AC009243">
    <property type="protein sequence ID" value="AAF17700.1"/>
    <property type="status" value="ALT_SEQ"/>
    <property type="molecule type" value="Genomic_DNA"/>
</dbReference>
<dbReference type="EMBL" id="CP002684">
    <property type="protein sequence ID" value="AEE36036.1"/>
    <property type="molecule type" value="Genomic_DNA"/>
</dbReference>
<dbReference type="EMBL" id="DQ446440">
    <property type="protein sequence ID" value="ABE65782.1"/>
    <property type="status" value="ALT_SEQ"/>
    <property type="molecule type" value="mRNA"/>
</dbReference>
<dbReference type="RefSeq" id="NP_001321009.1">
    <property type="nucleotide sequence ID" value="NM_001334801.1"/>
</dbReference>
<dbReference type="RefSeq" id="NP_177909.2">
    <property type="nucleotide sequence ID" value="NM_106435.2"/>
</dbReference>
<dbReference type="SMR" id="F4I8K2"/>
<dbReference type="FunCoup" id="F4I8K2">
    <property type="interactions" value="29"/>
</dbReference>
<dbReference type="STRING" id="3702.F4I8K2"/>
<dbReference type="PaxDb" id="3702-AT1G77860.1"/>
<dbReference type="EnsemblPlants" id="AT1G77860.1">
    <property type="protein sequence ID" value="AT1G77860.1"/>
    <property type="gene ID" value="AT1G77860"/>
</dbReference>
<dbReference type="GeneID" id="844122"/>
<dbReference type="Gramene" id="AT1G77860.1">
    <property type="protein sequence ID" value="AT1G77860.1"/>
    <property type="gene ID" value="AT1G77860"/>
</dbReference>
<dbReference type="KEGG" id="ath:AT1G77860"/>
<dbReference type="Araport" id="AT1G77860"/>
<dbReference type="TAIR" id="AT1G77860">
    <property type="gene designation" value="KOM"/>
</dbReference>
<dbReference type="eggNOG" id="KOG2289">
    <property type="taxonomic scope" value="Eukaryota"/>
</dbReference>
<dbReference type="HOGENOM" id="CLU_011531_0_0_1"/>
<dbReference type="InParanoid" id="F4I8K2"/>
<dbReference type="OMA" id="INSYCTW"/>
<dbReference type="PhylomeDB" id="F4I8K2"/>
<dbReference type="PRO" id="PR:F4I8K2"/>
<dbReference type="Proteomes" id="UP000006548">
    <property type="component" value="Chromosome 1"/>
</dbReference>
<dbReference type="ExpressionAtlas" id="F4I8K2">
    <property type="expression patterns" value="baseline and differential"/>
</dbReference>
<dbReference type="GO" id="GO:0000139">
    <property type="term" value="C:Golgi membrane"/>
    <property type="evidence" value="ECO:0007669"/>
    <property type="project" value="UniProtKB-SubCell"/>
</dbReference>
<dbReference type="GO" id="GO:0004252">
    <property type="term" value="F:serine-type endopeptidase activity"/>
    <property type="evidence" value="ECO:0007669"/>
    <property type="project" value="InterPro"/>
</dbReference>
<dbReference type="GO" id="GO:0006508">
    <property type="term" value="P:proteolysis"/>
    <property type="evidence" value="ECO:0007669"/>
    <property type="project" value="InterPro"/>
</dbReference>
<dbReference type="Gene3D" id="1.20.1540.10">
    <property type="entry name" value="Rhomboid-like"/>
    <property type="match status" value="1"/>
</dbReference>
<dbReference type="InterPro" id="IPR002610">
    <property type="entry name" value="Peptidase_S54_rhomboid-like"/>
</dbReference>
<dbReference type="InterPro" id="IPR022764">
    <property type="entry name" value="Peptidase_S54_rhomboid_dom"/>
</dbReference>
<dbReference type="InterPro" id="IPR035952">
    <property type="entry name" value="Rhomboid-like_sf"/>
</dbReference>
<dbReference type="PANTHER" id="PTHR22936:SF75">
    <property type="entry name" value="RHOMBOID-LIKE PROTEIN 8"/>
    <property type="match status" value="1"/>
</dbReference>
<dbReference type="PANTHER" id="PTHR22936">
    <property type="entry name" value="RHOMBOID-RELATED"/>
    <property type="match status" value="1"/>
</dbReference>
<dbReference type="Pfam" id="PF01694">
    <property type="entry name" value="Rhomboid"/>
    <property type="match status" value="1"/>
</dbReference>
<dbReference type="SUPFAM" id="SSF144091">
    <property type="entry name" value="Rhomboid-like"/>
    <property type="match status" value="1"/>
</dbReference>
<name>RBL8_ARATH</name>
<evidence type="ECO:0000255" key="1"/>
<evidence type="ECO:0000303" key="2">
    <source>
    </source>
</evidence>
<evidence type="ECO:0000303" key="3">
    <source>
    </source>
</evidence>
<evidence type="ECO:0000303" key="4">
    <source>
    </source>
</evidence>
<evidence type="ECO:0000303" key="5">
    <source>
    </source>
</evidence>
<evidence type="ECO:0000305" key="6"/>
<evidence type="ECO:0000305" key="7">
    <source>
    </source>
</evidence>
<evidence type="ECO:0000305" key="8">
    <source ref="9"/>
</evidence>
<evidence type="ECO:0000312" key="9">
    <source>
        <dbReference type="Araport" id="AT1G77860"/>
    </source>
</evidence>
<evidence type="ECO:0000312" key="10">
    <source>
        <dbReference type="EMBL" id="AAF17700.1"/>
    </source>
</evidence>
<evidence type="ECO:0000312" key="11">
    <source>
        <dbReference type="Proteomes" id="UP000006548"/>
    </source>
</evidence>
<protein>
    <recommendedName>
        <fullName evidence="7">Inactive RHOMBOID-like protein 8</fullName>
        <shortName evidence="6">AtRBL8</shortName>
    </recommendedName>
    <alternativeName>
        <fullName evidence="2">Protein KOMPEITO</fullName>
    </alternativeName>
</protein>
<feature type="chain" id="PRO_0000433329" description="Inactive RHOMBOID-like protein 8">
    <location>
        <begin position="1"/>
        <end position="351"/>
    </location>
</feature>
<feature type="transmembrane region" description="Helical" evidence="1">
    <location>
        <begin position="48"/>
        <end position="68"/>
    </location>
</feature>
<feature type="transmembrane region" description="Helical" evidence="1">
    <location>
        <begin position="130"/>
        <end position="150"/>
    </location>
</feature>
<feature type="transmembrane region" description="Helical" evidence="1">
    <location>
        <begin position="160"/>
        <end position="180"/>
    </location>
</feature>
<feature type="transmembrane region" description="Helical" evidence="1">
    <location>
        <begin position="183"/>
        <end position="203"/>
    </location>
</feature>
<feature type="transmembrane region" description="Helical" evidence="1">
    <location>
        <begin position="216"/>
        <end position="236"/>
    </location>
</feature>
<feature type="transmembrane region" description="Helical" evidence="1">
    <location>
        <begin position="239"/>
        <end position="259"/>
    </location>
</feature>
<feature type="transmembrane region" description="Helical" evidence="1">
    <location>
        <begin position="294"/>
        <end position="314"/>
    </location>
</feature>
<sequence length="351" mass="39315">MEVPTESKTTQIDEISHNLSFTTSNAGDSSWDKISFFRHRSRQIKRDTWLVSVFVLLQIVLFAVTMGVNDCSGNSHGHCSAKLLGRFSFQSLSENPMLGPSASTLEHMGGLSWKALTENHEIWRILTSPWLHSGLFHLFINLGSLIFVGIYMEQQFGPLRIAVIYFLSGIMGSLFAVLFVRNIPSISSGAAFFGLIGAMLSALAKNWNLYNSKISALAIIFTIFTVNFLIGFLPFIDNFANIGGFISGFLLGFVLLFKPQLRQMPPSHKGKLFEDDMNRSTRLKEQFDRPVLRIICLLVFCGILAGVLLAACWGVNLNRHCHWCRYVDCVPTKKWSCSDMTTSCEVYSSKP</sequence>
<proteinExistence type="evidence at transcript level"/>
<comment type="function">
    <text evidence="5">Probable inactive rhomboid-type serine protease.</text>
</comment>
<comment type="function">
    <text evidence="8">Probably essential for the meiosis stage-specific callose accumulation and pollen exine formation.</text>
</comment>
<comment type="subcellular location">
    <subcellularLocation>
        <location evidence="8">Golgi apparatus membrane</location>
        <topology evidence="1">Multi-pass membrane protein</topology>
    </subcellularLocation>
</comment>
<comment type="tissue specificity">
    <text evidence="8">Expressed in pollen mother cell.</text>
</comment>
<comment type="similarity">
    <text evidence="6">Belongs to the peptidase S54 family.</text>
</comment>
<comment type="caution">
    <text evidence="4">Might be an inactive rhomboid-type serine protease due to mismatches with the consensus active sites.</text>
</comment>
<comment type="sequence caution" evidence="6">
    <conflict type="erroneous gene model prediction">
        <sequence resource="EMBL-CDS" id="AAF17700"/>
    </conflict>
</comment>
<comment type="sequence caution" evidence="6">
    <conflict type="erroneous translation">
        <sequence resource="EMBL-CDS" id="ABE65782"/>
    </conflict>
    <text>Wrong choice of frame.</text>
</comment>
<comment type="sequence caution" evidence="6">
    <conflict type="erroneous gene model prediction">
        <sequence resource="EMBL-CDS" id="BAK20219"/>
    </conflict>
</comment>
<accession>F4I8K2</accession>
<accession>F2Z6M1</accession>
<accession>Q1PFC3</accession>
<accession>Q9SH15</accession>
<keyword id="KW-0333">Golgi apparatus</keyword>
<keyword id="KW-0472">Membrane</keyword>
<keyword id="KW-1185">Reference proteome</keyword>
<keyword id="KW-0812">Transmembrane</keyword>
<keyword id="KW-1133">Transmembrane helix</keyword>
<reference key="1">
    <citation type="submission" date="2006-04" db="EMBL/GenBank/DDBJ databases">
        <title>A plant Rhomboid responsible for the processing of multi-path membrane protein and pollen-stigma adhesion.</title>
        <authorList>
            <person name="Kanaoka M.M."/>
            <person name="Shimizu K.K."/>
            <person name="Urban S."/>
            <person name="Freeman M."/>
            <person name="Hong Z."/>
            <person name="Okada K."/>
        </authorList>
    </citation>
    <scope>NUCLEOTIDE SEQUENCE [GENOMIC DNA]</scope>
</reference>
<reference key="2">
    <citation type="journal article" date="2000" name="Nature">
        <title>Sequence and analysis of chromosome 1 of the plant Arabidopsis thaliana.</title>
        <authorList>
            <person name="Theologis A."/>
            <person name="Ecker J.R."/>
            <person name="Palm C.J."/>
            <person name="Federspiel N.A."/>
            <person name="Kaul S."/>
            <person name="White O."/>
            <person name="Alonso J."/>
            <person name="Altafi H."/>
            <person name="Araujo R."/>
            <person name="Bowman C.L."/>
            <person name="Brooks S.Y."/>
            <person name="Buehler E."/>
            <person name="Chan A."/>
            <person name="Chao Q."/>
            <person name="Chen H."/>
            <person name="Cheuk R.F."/>
            <person name="Chin C.W."/>
            <person name="Chung M.K."/>
            <person name="Conn L."/>
            <person name="Conway A.B."/>
            <person name="Conway A.R."/>
            <person name="Creasy T.H."/>
            <person name="Dewar K."/>
            <person name="Dunn P."/>
            <person name="Etgu P."/>
            <person name="Feldblyum T.V."/>
            <person name="Feng J.-D."/>
            <person name="Fong B."/>
            <person name="Fujii C.Y."/>
            <person name="Gill J.E."/>
            <person name="Goldsmith A.D."/>
            <person name="Haas B."/>
            <person name="Hansen N.F."/>
            <person name="Hughes B."/>
            <person name="Huizar L."/>
            <person name="Hunter J.L."/>
            <person name="Jenkins J."/>
            <person name="Johnson-Hopson C."/>
            <person name="Khan S."/>
            <person name="Khaykin E."/>
            <person name="Kim C.J."/>
            <person name="Koo H.L."/>
            <person name="Kremenetskaia I."/>
            <person name="Kurtz D.B."/>
            <person name="Kwan A."/>
            <person name="Lam B."/>
            <person name="Langin-Hooper S."/>
            <person name="Lee A."/>
            <person name="Lee J.M."/>
            <person name="Lenz C.A."/>
            <person name="Li J.H."/>
            <person name="Li Y.-P."/>
            <person name="Lin X."/>
            <person name="Liu S.X."/>
            <person name="Liu Z.A."/>
            <person name="Luros J.S."/>
            <person name="Maiti R."/>
            <person name="Marziali A."/>
            <person name="Militscher J."/>
            <person name="Miranda M."/>
            <person name="Nguyen M."/>
            <person name="Nierman W.C."/>
            <person name="Osborne B.I."/>
            <person name="Pai G."/>
            <person name="Peterson J."/>
            <person name="Pham P.K."/>
            <person name="Rizzo M."/>
            <person name="Rooney T."/>
            <person name="Rowley D."/>
            <person name="Sakano H."/>
            <person name="Salzberg S.L."/>
            <person name="Schwartz J.R."/>
            <person name="Shinn P."/>
            <person name="Southwick A.M."/>
            <person name="Sun H."/>
            <person name="Tallon L.J."/>
            <person name="Tambunga G."/>
            <person name="Toriumi M.J."/>
            <person name="Town C.D."/>
            <person name="Utterback T."/>
            <person name="Van Aken S."/>
            <person name="Vaysberg M."/>
            <person name="Vysotskaia V.S."/>
            <person name="Walker M."/>
            <person name="Wu D."/>
            <person name="Yu G."/>
            <person name="Fraser C.M."/>
            <person name="Venter J.C."/>
            <person name="Davis R.W."/>
        </authorList>
    </citation>
    <scope>NUCLEOTIDE SEQUENCE [LARGE SCALE GENOMIC DNA]</scope>
    <source>
        <strain>cv. Columbia</strain>
    </source>
</reference>
<reference key="3">
    <citation type="journal article" date="2017" name="Plant J.">
        <title>Araport11: a complete reannotation of the Arabidopsis thaliana reference genome.</title>
        <authorList>
            <person name="Cheng C.Y."/>
            <person name="Krishnakumar V."/>
            <person name="Chan A.P."/>
            <person name="Thibaud-Nissen F."/>
            <person name="Schobel S."/>
            <person name="Town C.D."/>
        </authorList>
    </citation>
    <scope>GENOME REANNOTATION</scope>
    <source>
        <strain>cv. Columbia</strain>
    </source>
</reference>
<reference key="4">
    <citation type="journal article" date="2006" name="Plant Biotechnol. J.">
        <title>Simultaneous high-throughput recombinational cloning of open reading frames in closed and open configurations.</title>
        <authorList>
            <person name="Underwood B.A."/>
            <person name="Vanderhaeghen R."/>
            <person name="Whitford R."/>
            <person name="Town C.D."/>
            <person name="Hilson P."/>
        </authorList>
    </citation>
    <scope>NUCLEOTIDE SEQUENCE [LARGE SCALE MRNA] OF 1-340</scope>
    <source>
        <strain>cv. Columbia</strain>
    </source>
</reference>
<reference key="5">
    <citation type="journal article" date="2005" name="FEBS Lett.">
        <title>An Arabidopsis Rhomboid homolog is an intramembrane protease in plants.</title>
        <authorList>
            <person name="Kanaoka M.M."/>
            <person name="Urban S."/>
            <person name="Freeman M."/>
            <person name="Okada K."/>
        </authorList>
    </citation>
    <scope>GENE FAMILY</scope>
    <scope>NOMENCLATURE</scope>
    <source>
        <strain>cv. Columbia</strain>
    </source>
</reference>
<reference key="6">
    <citation type="journal article" date="2006" name="BMC Genomics">
        <title>Cross genome comparisons of serine proteases in Arabidopsis and rice.</title>
        <authorList>
            <person name="Tripathi L.P."/>
            <person name="Sowdhamini R."/>
        </authorList>
    </citation>
    <scope>GENE FAMILY</scope>
    <scope>NOMENCLATURE</scope>
</reference>
<reference key="7">
    <citation type="journal article" date="2006" name="BMC Plant Biol.">
        <title>Protease gene families in Populus and Arabidopsis.</title>
        <authorList>
            <person name="Garcia-Lorenzo M."/>
            <person name="Sjodin A."/>
            <person name="Jansson S."/>
            <person name="Funk C."/>
        </authorList>
    </citation>
    <scope>GENE FAMILY</scope>
    <scope>NOMENCLATURE</scope>
</reference>
<reference key="8">
    <citation type="journal article" date="2007" name="Genome Res.">
        <title>Functional and evolutionary implications of enhanced genomic analysis of rhomboid intramembrane proteases.</title>
        <authorList>
            <person name="Lemberg M.K."/>
            <person name="Freeman M."/>
        </authorList>
    </citation>
    <scope>GENE FAMILY</scope>
</reference>
<reference key="9">
    <citation type="book" date="2003" name="Proceedings of the 14th international conference on Arabidopsis research">
        <title>KOMPEITO is important for callose accumulation and the exine pattern formation in Arabidopsis.</title>
        <authorList>
            <person name="Kanaoka M."/>
            <person name="Shimizu K."/>
            <person name="Okada K."/>
        </authorList>
    </citation>
    <scope>FUNCTION</scope>
    <scope>SUBCELLULAR LOCATION</scope>
    <scope>TISSUE SPECIFICITY</scope>
</reference>
<reference key="10">
    <citation type="journal article" date="2012" name="Physiol. Plantarum">
        <title>Rhomboid proteases in plants - still in square one?</title>
        <authorList>
            <person name="Knopf R.R."/>
            <person name="Adam Z."/>
        </authorList>
    </citation>
    <scope>REVIEW</scope>
</reference>
<organism evidence="11">
    <name type="scientific">Arabidopsis thaliana</name>
    <name type="common">Mouse-ear cress</name>
    <dbReference type="NCBI Taxonomy" id="3702"/>
    <lineage>
        <taxon>Eukaryota</taxon>
        <taxon>Viridiplantae</taxon>
        <taxon>Streptophyta</taxon>
        <taxon>Embryophyta</taxon>
        <taxon>Tracheophyta</taxon>
        <taxon>Spermatophyta</taxon>
        <taxon>Magnoliopsida</taxon>
        <taxon>eudicotyledons</taxon>
        <taxon>Gunneridae</taxon>
        <taxon>Pentapetalae</taxon>
        <taxon>rosids</taxon>
        <taxon>malvids</taxon>
        <taxon>Brassicales</taxon>
        <taxon>Brassicaceae</taxon>
        <taxon>Camelineae</taxon>
        <taxon>Arabidopsis</taxon>
    </lineage>
</organism>
<gene>
    <name evidence="2 3" type="primary">KOM</name>
    <name evidence="6" type="synonym">RBL8</name>
    <name evidence="9" type="ordered locus">At1g77860</name>
    <name evidence="10" type="ORF">F28K19.7</name>
</gene>